<comment type="function">
    <text evidence="1">Binds to 23S rRNA. Forms part of two intersubunit bridges in the 70S ribosome.</text>
</comment>
<comment type="subunit">
    <text evidence="1">Part of the 50S ribosomal subunit. Forms a cluster with proteins L3 and L19. In the 70S ribosome, L14 and L19 interact and together make contacts with the 16S rRNA in bridges B5 and B8.</text>
</comment>
<comment type="similarity">
    <text evidence="1">Belongs to the universal ribosomal protein uL14 family.</text>
</comment>
<accession>Q11QC2</accession>
<reference key="1">
    <citation type="journal article" date="2007" name="Appl. Environ. Microbiol.">
        <title>Genome sequence of the cellulolytic gliding bacterium Cytophaga hutchinsonii.</title>
        <authorList>
            <person name="Xie G."/>
            <person name="Bruce D.C."/>
            <person name="Challacombe J.F."/>
            <person name="Chertkov O."/>
            <person name="Detter J.C."/>
            <person name="Gilna P."/>
            <person name="Han C.S."/>
            <person name="Lucas S."/>
            <person name="Misra M."/>
            <person name="Myers G.L."/>
            <person name="Richardson P."/>
            <person name="Tapia R."/>
            <person name="Thayer N."/>
            <person name="Thompson L.S."/>
            <person name="Brettin T.S."/>
            <person name="Henrissat B."/>
            <person name="Wilson D.B."/>
            <person name="McBride M.J."/>
        </authorList>
    </citation>
    <scope>NUCLEOTIDE SEQUENCE [LARGE SCALE GENOMIC DNA]</scope>
    <source>
        <strain>ATCC 33406 / DSM 1761 / JCM 20678 / CIP 103989 / IAM 12607 / NBRC 15051 / NCIMB 9469 / D465</strain>
    </source>
</reference>
<evidence type="ECO:0000255" key="1">
    <source>
        <dbReference type="HAMAP-Rule" id="MF_01367"/>
    </source>
</evidence>
<evidence type="ECO:0000305" key="2"/>
<sequence length="122" mass="13262">MIQQESRLSVADNSGAKEVLVIRVLGGTGKRYASIGDKVVVTVKSAISSSNMKKGTVSKAVVVRTKKEVKRADGSYIRFSDNAAVLLNNNDEPRGTRIFGPVARELRDKQFMKIVSLAPEVL</sequence>
<feature type="chain" id="PRO_0000266474" description="Large ribosomal subunit protein uL14">
    <location>
        <begin position="1"/>
        <end position="122"/>
    </location>
</feature>
<protein>
    <recommendedName>
        <fullName evidence="1">Large ribosomal subunit protein uL14</fullName>
    </recommendedName>
    <alternativeName>
        <fullName evidence="2">50S ribosomal protein L14</fullName>
    </alternativeName>
</protein>
<dbReference type="EMBL" id="CP000383">
    <property type="protein sequence ID" value="ABG60392.1"/>
    <property type="molecule type" value="Genomic_DNA"/>
</dbReference>
<dbReference type="RefSeq" id="WP_011586501.1">
    <property type="nucleotide sequence ID" value="NC_008255.1"/>
</dbReference>
<dbReference type="SMR" id="Q11QC2"/>
<dbReference type="STRING" id="269798.CHU_3152"/>
<dbReference type="KEGG" id="chu:CHU_3152"/>
<dbReference type="eggNOG" id="COG0093">
    <property type="taxonomic scope" value="Bacteria"/>
</dbReference>
<dbReference type="HOGENOM" id="CLU_095071_2_1_10"/>
<dbReference type="OrthoDB" id="9806379at2"/>
<dbReference type="Proteomes" id="UP000001822">
    <property type="component" value="Chromosome"/>
</dbReference>
<dbReference type="GO" id="GO:0022625">
    <property type="term" value="C:cytosolic large ribosomal subunit"/>
    <property type="evidence" value="ECO:0007669"/>
    <property type="project" value="TreeGrafter"/>
</dbReference>
<dbReference type="GO" id="GO:0070180">
    <property type="term" value="F:large ribosomal subunit rRNA binding"/>
    <property type="evidence" value="ECO:0007669"/>
    <property type="project" value="TreeGrafter"/>
</dbReference>
<dbReference type="GO" id="GO:0003735">
    <property type="term" value="F:structural constituent of ribosome"/>
    <property type="evidence" value="ECO:0007669"/>
    <property type="project" value="InterPro"/>
</dbReference>
<dbReference type="GO" id="GO:0006412">
    <property type="term" value="P:translation"/>
    <property type="evidence" value="ECO:0007669"/>
    <property type="project" value="UniProtKB-UniRule"/>
</dbReference>
<dbReference type="CDD" id="cd00337">
    <property type="entry name" value="Ribosomal_uL14"/>
    <property type="match status" value="1"/>
</dbReference>
<dbReference type="FunFam" id="2.40.150.20:FF:000001">
    <property type="entry name" value="50S ribosomal protein L14"/>
    <property type="match status" value="1"/>
</dbReference>
<dbReference type="Gene3D" id="2.40.150.20">
    <property type="entry name" value="Ribosomal protein L14"/>
    <property type="match status" value="1"/>
</dbReference>
<dbReference type="HAMAP" id="MF_01367">
    <property type="entry name" value="Ribosomal_uL14"/>
    <property type="match status" value="1"/>
</dbReference>
<dbReference type="InterPro" id="IPR000218">
    <property type="entry name" value="Ribosomal_uL14"/>
</dbReference>
<dbReference type="InterPro" id="IPR005745">
    <property type="entry name" value="Ribosomal_uL14_bac-type"/>
</dbReference>
<dbReference type="InterPro" id="IPR019972">
    <property type="entry name" value="Ribosomal_uL14_CS"/>
</dbReference>
<dbReference type="InterPro" id="IPR036853">
    <property type="entry name" value="Ribosomal_uL14_sf"/>
</dbReference>
<dbReference type="NCBIfam" id="TIGR01067">
    <property type="entry name" value="rplN_bact"/>
    <property type="match status" value="1"/>
</dbReference>
<dbReference type="PANTHER" id="PTHR11761">
    <property type="entry name" value="50S/60S RIBOSOMAL PROTEIN L14/L23"/>
    <property type="match status" value="1"/>
</dbReference>
<dbReference type="PANTHER" id="PTHR11761:SF3">
    <property type="entry name" value="LARGE RIBOSOMAL SUBUNIT PROTEIN UL14M"/>
    <property type="match status" value="1"/>
</dbReference>
<dbReference type="Pfam" id="PF00238">
    <property type="entry name" value="Ribosomal_L14"/>
    <property type="match status" value="1"/>
</dbReference>
<dbReference type="SMART" id="SM01374">
    <property type="entry name" value="Ribosomal_L14"/>
    <property type="match status" value="1"/>
</dbReference>
<dbReference type="SUPFAM" id="SSF50193">
    <property type="entry name" value="Ribosomal protein L14"/>
    <property type="match status" value="1"/>
</dbReference>
<dbReference type="PROSITE" id="PS00049">
    <property type="entry name" value="RIBOSOMAL_L14"/>
    <property type="match status" value="1"/>
</dbReference>
<name>RL14_CYTH3</name>
<organism>
    <name type="scientific">Cytophaga hutchinsonii (strain ATCC 33406 / DSM 1761 / CIP 103989 / NBRC 15051 / NCIMB 9469 / D465)</name>
    <dbReference type="NCBI Taxonomy" id="269798"/>
    <lineage>
        <taxon>Bacteria</taxon>
        <taxon>Pseudomonadati</taxon>
        <taxon>Bacteroidota</taxon>
        <taxon>Cytophagia</taxon>
        <taxon>Cytophagales</taxon>
        <taxon>Cytophagaceae</taxon>
        <taxon>Cytophaga</taxon>
    </lineage>
</organism>
<gene>
    <name evidence="1" type="primary">rplN</name>
    <name type="ordered locus">CHU_3152</name>
</gene>
<proteinExistence type="inferred from homology"/>
<keyword id="KW-1185">Reference proteome</keyword>
<keyword id="KW-0687">Ribonucleoprotein</keyword>
<keyword id="KW-0689">Ribosomal protein</keyword>
<keyword id="KW-0694">RNA-binding</keyword>
<keyword id="KW-0699">rRNA-binding</keyword>